<gene>
    <name evidence="1" type="primary">rplA</name>
    <name type="ordered locus">Bsph_4634</name>
</gene>
<feature type="chain" id="PRO_1000141425" description="Large ribosomal subunit protein uL1">
    <location>
        <begin position="1"/>
        <end position="232"/>
    </location>
</feature>
<reference key="1">
    <citation type="journal article" date="2008" name="J. Bacteriol.">
        <title>Complete genome sequence of the mosquitocidal bacterium Bacillus sphaericus C3-41 and comparison with those of closely related Bacillus species.</title>
        <authorList>
            <person name="Hu X."/>
            <person name="Fan W."/>
            <person name="Han B."/>
            <person name="Liu H."/>
            <person name="Zheng D."/>
            <person name="Li Q."/>
            <person name="Dong W."/>
            <person name="Yan J."/>
            <person name="Gao M."/>
            <person name="Berry C."/>
            <person name="Yuan Z."/>
        </authorList>
    </citation>
    <scope>NUCLEOTIDE SEQUENCE [LARGE SCALE GENOMIC DNA]</scope>
    <source>
        <strain>C3-41</strain>
    </source>
</reference>
<comment type="function">
    <text evidence="1">Binds directly to 23S rRNA. The L1 stalk is quite mobile in the ribosome, and is involved in E site tRNA release.</text>
</comment>
<comment type="function">
    <text evidence="1">Protein L1 is also a translational repressor protein, it controls the translation of the L11 operon by binding to its mRNA.</text>
</comment>
<comment type="subunit">
    <text evidence="1">Part of the 50S ribosomal subunit.</text>
</comment>
<comment type="similarity">
    <text evidence="1">Belongs to the universal ribosomal protein uL1 family.</text>
</comment>
<evidence type="ECO:0000255" key="1">
    <source>
        <dbReference type="HAMAP-Rule" id="MF_01318"/>
    </source>
</evidence>
<evidence type="ECO:0000305" key="2"/>
<protein>
    <recommendedName>
        <fullName evidence="1">Large ribosomal subunit protein uL1</fullName>
    </recommendedName>
    <alternativeName>
        <fullName evidence="2">50S ribosomal protein L1</fullName>
    </alternativeName>
</protein>
<accession>B1HNL5</accession>
<organism>
    <name type="scientific">Lysinibacillus sphaericus (strain C3-41)</name>
    <dbReference type="NCBI Taxonomy" id="444177"/>
    <lineage>
        <taxon>Bacteria</taxon>
        <taxon>Bacillati</taxon>
        <taxon>Bacillota</taxon>
        <taxon>Bacilli</taxon>
        <taxon>Bacillales</taxon>
        <taxon>Bacillaceae</taxon>
        <taxon>Lysinibacillus</taxon>
    </lineage>
</organism>
<keyword id="KW-0678">Repressor</keyword>
<keyword id="KW-0687">Ribonucleoprotein</keyword>
<keyword id="KW-0689">Ribosomal protein</keyword>
<keyword id="KW-0694">RNA-binding</keyword>
<keyword id="KW-0699">rRNA-binding</keyword>
<keyword id="KW-0810">Translation regulation</keyword>
<keyword id="KW-0820">tRNA-binding</keyword>
<sequence>MAKKGKKLQDAAKLIDRNSLYSAQEAIELAQKTSTVNFDATVEVAFRLGIDTRKNDQQIRGAVVLPNGTGKTQRVLVFAKGEKLKEAEAAGADYVGDAEYIQKIQQGWFDFDVIVATPDMMGEVGKLGRVLGPKGLMPNPKTGTVTFDVTKAIEEIKAGKVEYRADKAGIIHAPIGKVSFSAAKLVENFLAVFDVVQKAKPAAAKGTYMKSVNITTTMGPAVKIDAANVVVK</sequence>
<proteinExistence type="inferred from homology"/>
<name>RL1_LYSSC</name>
<dbReference type="EMBL" id="CP000817">
    <property type="protein sequence ID" value="ACA42078.1"/>
    <property type="molecule type" value="Genomic_DNA"/>
</dbReference>
<dbReference type="RefSeq" id="WP_012296081.1">
    <property type="nucleotide sequence ID" value="NC_010382.1"/>
</dbReference>
<dbReference type="SMR" id="B1HNL5"/>
<dbReference type="EnsemblBacteria" id="ACA42078">
    <property type="protein sequence ID" value="ACA42078"/>
    <property type="gene ID" value="Bsph_4634"/>
</dbReference>
<dbReference type="KEGG" id="lsp:Bsph_4634"/>
<dbReference type="HOGENOM" id="CLU_062853_0_0_9"/>
<dbReference type="Proteomes" id="UP000002164">
    <property type="component" value="Chromosome"/>
</dbReference>
<dbReference type="GO" id="GO:0015934">
    <property type="term" value="C:large ribosomal subunit"/>
    <property type="evidence" value="ECO:0007669"/>
    <property type="project" value="InterPro"/>
</dbReference>
<dbReference type="GO" id="GO:0019843">
    <property type="term" value="F:rRNA binding"/>
    <property type="evidence" value="ECO:0007669"/>
    <property type="project" value="UniProtKB-UniRule"/>
</dbReference>
<dbReference type="GO" id="GO:0003735">
    <property type="term" value="F:structural constituent of ribosome"/>
    <property type="evidence" value="ECO:0007669"/>
    <property type="project" value="InterPro"/>
</dbReference>
<dbReference type="GO" id="GO:0000049">
    <property type="term" value="F:tRNA binding"/>
    <property type="evidence" value="ECO:0007669"/>
    <property type="project" value="UniProtKB-KW"/>
</dbReference>
<dbReference type="GO" id="GO:0006417">
    <property type="term" value="P:regulation of translation"/>
    <property type="evidence" value="ECO:0007669"/>
    <property type="project" value="UniProtKB-KW"/>
</dbReference>
<dbReference type="GO" id="GO:0006412">
    <property type="term" value="P:translation"/>
    <property type="evidence" value="ECO:0007669"/>
    <property type="project" value="UniProtKB-UniRule"/>
</dbReference>
<dbReference type="CDD" id="cd00403">
    <property type="entry name" value="Ribosomal_L1"/>
    <property type="match status" value="1"/>
</dbReference>
<dbReference type="FunFam" id="3.40.50.790:FF:000001">
    <property type="entry name" value="50S ribosomal protein L1"/>
    <property type="match status" value="1"/>
</dbReference>
<dbReference type="Gene3D" id="3.30.190.20">
    <property type="match status" value="1"/>
</dbReference>
<dbReference type="Gene3D" id="3.40.50.790">
    <property type="match status" value="1"/>
</dbReference>
<dbReference type="HAMAP" id="MF_01318_B">
    <property type="entry name" value="Ribosomal_uL1_B"/>
    <property type="match status" value="1"/>
</dbReference>
<dbReference type="InterPro" id="IPR005878">
    <property type="entry name" value="Ribosom_uL1_bac-type"/>
</dbReference>
<dbReference type="InterPro" id="IPR002143">
    <property type="entry name" value="Ribosomal_uL1"/>
</dbReference>
<dbReference type="InterPro" id="IPR023674">
    <property type="entry name" value="Ribosomal_uL1-like"/>
</dbReference>
<dbReference type="InterPro" id="IPR028364">
    <property type="entry name" value="Ribosomal_uL1/biogenesis"/>
</dbReference>
<dbReference type="InterPro" id="IPR016095">
    <property type="entry name" value="Ribosomal_uL1_3-a/b-sand"/>
</dbReference>
<dbReference type="InterPro" id="IPR023673">
    <property type="entry name" value="Ribosomal_uL1_CS"/>
</dbReference>
<dbReference type="NCBIfam" id="TIGR01169">
    <property type="entry name" value="rplA_bact"/>
    <property type="match status" value="1"/>
</dbReference>
<dbReference type="PANTHER" id="PTHR36427">
    <property type="entry name" value="54S RIBOSOMAL PROTEIN L1, MITOCHONDRIAL"/>
    <property type="match status" value="1"/>
</dbReference>
<dbReference type="PANTHER" id="PTHR36427:SF3">
    <property type="entry name" value="LARGE RIBOSOMAL SUBUNIT PROTEIN UL1M"/>
    <property type="match status" value="1"/>
</dbReference>
<dbReference type="Pfam" id="PF00687">
    <property type="entry name" value="Ribosomal_L1"/>
    <property type="match status" value="1"/>
</dbReference>
<dbReference type="PIRSF" id="PIRSF002155">
    <property type="entry name" value="Ribosomal_L1"/>
    <property type="match status" value="1"/>
</dbReference>
<dbReference type="SUPFAM" id="SSF56808">
    <property type="entry name" value="Ribosomal protein L1"/>
    <property type="match status" value="1"/>
</dbReference>
<dbReference type="PROSITE" id="PS01199">
    <property type="entry name" value="RIBOSOMAL_L1"/>
    <property type="match status" value="1"/>
</dbReference>